<gene>
    <name evidence="1" type="primary">pgi</name>
    <name type="ordered locus">Rxyl_2677</name>
</gene>
<organism>
    <name type="scientific">Rubrobacter xylanophilus (strain DSM 9941 / JCM 11954 / NBRC 16129 / PRD-1)</name>
    <dbReference type="NCBI Taxonomy" id="266117"/>
    <lineage>
        <taxon>Bacteria</taxon>
        <taxon>Bacillati</taxon>
        <taxon>Actinomycetota</taxon>
        <taxon>Rubrobacteria</taxon>
        <taxon>Rubrobacterales</taxon>
        <taxon>Rubrobacteraceae</taxon>
        <taxon>Rubrobacter</taxon>
    </lineage>
</organism>
<name>G6PI_RUBXD</name>
<keyword id="KW-0963">Cytoplasm</keyword>
<keyword id="KW-0312">Gluconeogenesis</keyword>
<keyword id="KW-0324">Glycolysis</keyword>
<keyword id="KW-0413">Isomerase</keyword>
<keyword id="KW-1185">Reference proteome</keyword>
<accession>Q1ASN4</accession>
<feature type="chain" id="PRO_0000252643" description="Glucose-6-phosphate isomerase">
    <location>
        <begin position="1"/>
        <end position="432"/>
    </location>
</feature>
<feature type="active site" description="Proton donor" evidence="1">
    <location>
        <position position="283"/>
    </location>
</feature>
<feature type="active site" evidence="1">
    <location>
        <position position="304"/>
    </location>
</feature>
<feature type="active site" evidence="1">
    <location>
        <position position="418"/>
    </location>
</feature>
<sequence>MADVTFDYRNLLEVEGGLTGRELEEISPRLRAAVGTLLEDPPGFMRLPRTREHLEASLEVAERVRSDGATDFVHVGIGGSALGPMVLHRALSHPFYNLLPDRGGPRLHFAENADPATLSGILDVIEPEGTWVNVVTKSGSTAETMANFLVIRGALAEALGDFGYQARTVVTTDPEKGFLKRIADREDLVTLQVPPEVGGRFSVLSPVGLLPAAVAGLDVEALLAGAARCVEELEEQGAEHPAVVGAAMHHLMDASRGRNIRVMMVYADALERLAAWFVQLWAESLGKDGKGSTPHGAVGTTDQHSQLQLYMEGPQDKVIEIVEVREHPRDVGIPGAYEDLEGVGYLSGHTVGELLNVECDATRRALTGAGRPNATIRLGSLSAENLGYLMQALEVQTAVAGALYGVNPYDQPGVEAGKRITYARMGRPGYRA</sequence>
<protein>
    <recommendedName>
        <fullName evidence="1">Glucose-6-phosphate isomerase</fullName>
        <shortName evidence="1">GPI</shortName>
        <ecNumber evidence="1">5.3.1.9</ecNumber>
    </recommendedName>
    <alternativeName>
        <fullName evidence="1">Phosphoglucose isomerase</fullName>
        <shortName evidence="1">PGI</shortName>
    </alternativeName>
    <alternativeName>
        <fullName evidence="1">Phosphohexose isomerase</fullName>
        <shortName evidence="1">PHI</shortName>
    </alternativeName>
</protein>
<reference key="1">
    <citation type="submission" date="2006-06" db="EMBL/GenBank/DDBJ databases">
        <title>Complete sequence of Rubrobacter xylanophilus DSM 9941.</title>
        <authorList>
            <consortium name="US DOE Joint Genome Institute"/>
            <person name="Copeland A."/>
            <person name="Lucas S."/>
            <person name="Lapidus A."/>
            <person name="Barry K."/>
            <person name="Detter J.C."/>
            <person name="Glavina del Rio T."/>
            <person name="Hammon N."/>
            <person name="Israni S."/>
            <person name="Dalin E."/>
            <person name="Tice H."/>
            <person name="Pitluck S."/>
            <person name="Munk A.C."/>
            <person name="Brettin T."/>
            <person name="Bruce D."/>
            <person name="Han C."/>
            <person name="Tapia R."/>
            <person name="Gilna P."/>
            <person name="Schmutz J."/>
            <person name="Larimer F."/>
            <person name="Land M."/>
            <person name="Hauser L."/>
            <person name="Kyrpides N."/>
            <person name="Lykidis A."/>
            <person name="da Costa M.S."/>
            <person name="Rainey F.A."/>
            <person name="Empadinhas N."/>
            <person name="Jolivet E."/>
            <person name="Battista J.R."/>
            <person name="Richardson P."/>
        </authorList>
    </citation>
    <scope>NUCLEOTIDE SEQUENCE [LARGE SCALE GENOMIC DNA]</scope>
    <source>
        <strain>DSM 9941 / JCM 11954 / NBRC 16129 / PRD-1</strain>
    </source>
</reference>
<comment type="function">
    <text evidence="1">Catalyzes the reversible isomerization of glucose-6-phosphate to fructose-6-phosphate.</text>
</comment>
<comment type="catalytic activity">
    <reaction evidence="1">
        <text>alpha-D-glucose 6-phosphate = beta-D-fructose 6-phosphate</text>
        <dbReference type="Rhea" id="RHEA:11816"/>
        <dbReference type="ChEBI" id="CHEBI:57634"/>
        <dbReference type="ChEBI" id="CHEBI:58225"/>
        <dbReference type="EC" id="5.3.1.9"/>
    </reaction>
</comment>
<comment type="pathway">
    <text evidence="1">Carbohydrate biosynthesis; gluconeogenesis.</text>
</comment>
<comment type="pathway">
    <text evidence="1">Carbohydrate degradation; glycolysis; D-glyceraldehyde 3-phosphate and glycerone phosphate from D-glucose: step 2/4.</text>
</comment>
<comment type="subcellular location">
    <subcellularLocation>
        <location evidence="1">Cytoplasm</location>
    </subcellularLocation>
</comment>
<comment type="similarity">
    <text evidence="1">Belongs to the GPI family.</text>
</comment>
<evidence type="ECO:0000255" key="1">
    <source>
        <dbReference type="HAMAP-Rule" id="MF_00473"/>
    </source>
</evidence>
<dbReference type="EC" id="5.3.1.9" evidence="1"/>
<dbReference type="EMBL" id="CP000386">
    <property type="protein sequence ID" value="ABG05594.1"/>
    <property type="molecule type" value="Genomic_DNA"/>
</dbReference>
<dbReference type="RefSeq" id="WP_011565603.1">
    <property type="nucleotide sequence ID" value="NC_008148.1"/>
</dbReference>
<dbReference type="SMR" id="Q1ASN4"/>
<dbReference type="STRING" id="266117.Rxyl_2677"/>
<dbReference type="KEGG" id="rxy:Rxyl_2677"/>
<dbReference type="eggNOG" id="COG0166">
    <property type="taxonomic scope" value="Bacteria"/>
</dbReference>
<dbReference type="HOGENOM" id="CLU_037303_1_0_11"/>
<dbReference type="OrthoDB" id="140919at2"/>
<dbReference type="PhylomeDB" id="Q1ASN4"/>
<dbReference type="UniPathway" id="UPA00109">
    <property type="reaction ID" value="UER00181"/>
</dbReference>
<dbReference type="UniPathway" id="UPA00138"/>
<dbReference type="Proteomes" id="UP000006637">
    <property type="component" value="Chromosome"/>
</dbReference>
<dbReference type="GO" id="GO:0005829">
    <property type="term" value="C:cytosol"/>
    <property type="evidence" value="ECO:0007669"/>
    <property type="project" value="TreeGrafter"/>
</dbReference>
<dbReference type="GO" id="GO:0097367">
    <property type="term" value="F:carbohydrate derivative binding"/>
    <property type="evidence" value="ECO:0007669"/>
    <property type="project" value="InterPro"/>
</dbReference>
<dbReference type="GO" id="GO:0004347">
    <property type="term" value="F:glucose-6-phosphate isomerase activity"/>
    <property type="evidence" value="ECO:0007669"/>
    <property type="project" value="UniProtKB-UniRule"/>
</dbReference>
<dbReference type="GO" id="GO:0048029">
    <property type="term" value="F:monosaccharide binding"/>
    <property type="evidence" value="ECO:0007669"/>
    <property type="project" value="TreeGrafter"/>
</dbReference>
<dbReference type="GO" id="GO:0006094">
    <property type="term" value="P:gluconeogenesis"/>
    <property type="evidence" value="ECO:0007669"/>
    <property type="project" value="UniProtKB-UniRule"/>
</dbReference>
<dbReference type="GO" id="GO:0051156">
    <property type="term" value="P:glucose 6-phosphate metabolic process"/>
    <property type="evidence" value="ECO:0007669"/>
    <property type="project" value="TreeGrafter"/>
</dbReference>
<dbReference type="GO" id="GO:0006096">
    <property type="term" value="P:glycolytic process"/>
    <property type="evidence" value="ECO:0007669"/>
    <property type="project" value="UniProtKB-UniRule"/>
</dbReference>
<dbReference type="CDD" id="cd05015">
    <property type="entry name" value="SIS_PGI_1"/>
    <property type="match status" value="1"/>
</dbReference>
<dbReference type="CDD" id="cd05016">
    <property type="entry name" value="SIS_PGI_2"/>
    <property type="match status" value="1"/>
</dbReference>
<dbReference type="FunFam" id="3.40.50.10490:FF:000016">
    <property type="entry name" value="Glucose-6-phosphate isomerase"/>
    <property type="match status" value="1"/>
</dbReference>
<dbReference type="Gene3D" id="3.40.50.10490">
    <property type="entry name" value="Glucose-6-phosphate isomerase like protein, domain 1"/>
    <property type="match status" value="2"/>
</dbReference>
<dbReference type="HAMAP" id="MF_00473">
    <property type="entry name" value="G6P_isomerase"/>
    <property type="match status" value="1"/>
</dbReference>
<dbReference type="InterPro" id="IPR001672">
    <property type="entry name" value="G6P_Isomerase"/>
</dbReference>
<dbReference type="InterPro" id="IPR018189">
    <property type="entry name" value="Phosphoglucose_isomerase_CS"/>
</dbReference>
<dbReference type="InterPro" id="IPR046348">
    <property type="entry name" value="SIS_dom_sf"/>
</dbReference>
<dbReference type="InterPro" id="IPR035476">
    <property type="entry name" value="SIS_PGI_1"/>
</dbReference>
<dbReference type="InterPro" id="IPR035482">
    <property type="entry name" value="SIS_PGI_2"/>
</dbReference>
<dbReference type="PANTHER" id="PTHR11469">
    <property type="entry name" value="GLUCOSE-6-PHOSPHATE ISOMERASE"/>
    <property type="match status" value="1"/>
</dbReference>
<dbReference type="PANTHER" id="PTHR11469:SF1">
    <property type="entry name" value="GLUCOSE-6-PHOSPHATE ISOMERASE"/>
    <property type="match status" value="1"/>
</dbReference>
<dbReference type="Pfam" id="PF00342">
    <property type="entry name" value="PGI"/>
    <property type="match status" value="2"/>
</dbReference>
<dbReference type="PRINTS" id="PR00662">
    <property type="entry name" value="G6PISOMERASE"/>
</dbReference>
<dbReference type="SUPFAM" id="SSF53697">
    <property type="entry name" value="SIS domain"/>
    <property type="match status" value="1"/>
</dbReference>
<dbReference type="PROSITE" id="PS00174">
    <property type="entry name" value="P_GLUCOSE_ISOMERASE_2"/>
    <property type="match status" value="1"/>
</dbReference>
<dbReference type="PROSITE" id="PS51463">
    <property type="entry name" value="P_GLUCOSE_ISOMERASE_3"/>
    <property type="match status" value="1"/>
</dbReference>
<proteinExistence type="inferred from homology"/>